<comment type="function">
    <text evidence="1">Promotes both transcription and replication of genomic RNA. Following virus entry into host cell, provides nuclear import of HDV RNPs thanks to its nuclear localization signal. May interact with host RNA polymerase II thereby changing its template requirement from DNA to RNA. RNA pol II complex would then acts as an RNA-directed RNA polymerase, and transcribe and replicate HDV genome (By similarity).</text>
</comment>
<comment type="subunit">
    <text evidence="1">Homodimer. Homooctamer. Interacts with host RNA polymerase II complex, and with host NPM1.</text>
</comment>
<comment type="subcellular location">
    <subcellularLocation>
        <location>Virion</location>
    </subcellularLocation>
    <subcellularLocation>
        <location evidence="1">Host nucleus</location>
    </subcellularLocation>
</comment>
<comment type="PTM">
    <text evidence="1">Phosphorylated at serines and threonines by host MAPK1/3, PKR, and CK2.</text>
</comment>
<comment type="PTM">
    <text evidence="1">Acetylation modulates nuclear localization. Neo-synthesized genomic RNA migrates from the nucleus to the cytoplasm, where they interact with S-HDAg, which once acetylated redirect both partners to the nucleus (By similarity).</text>
</comment>
<comment type="PTM">
    <text evidence="1">Methylation plays a role in viral genome replication.</text>
</comment>
<comment type="RNA editing">
    <location>
        <position position="196" evidence="1"/>
    </location>
    <text evidence="1">Partially edited. RNA editing at this position occurs on the antigenomic strand and consists of a conversion of A to G catalyzed by the cellular enzyme ADAR1. The unedited RNA version gives rise to the small delta antigen, which ends with a nonsense codon at position 196. In the edited version, this amber codon is modified to a tryptophan codon and gives rise to the large delta antigen protein (AC P0C6M0). S-HDAg suppresses editing of non-replicating antigenomic RNA, thereby regulating the extent of editing (By similarity).</text>
</comment>
<comment type="miscellaneous">
    <text>This strain belongs to the genotype I found in North America, Europe, Africa, East and West Asia and the South Pacific.</text>
</comment>
<comment type="similarity">
    <text evidence="6">Belongs to the hepatitis delta antigen family.</text>
</comment>
<organism>
    <name type="scientific">Hepatitis delta virus genotype I (isolate Japanese S-2)</name>
    <name type="common">HDV</name>
    <dbReference type="NCBI Taxonomy" id="10428"/>
    <lineage>
        <taxon>Viruses</taxon>
        <taxon>Ribozyviria</taxon>
        <taxon>Kolmioviridae</taxon>
        <taxon>Deltavirus</taxon>
        <taxon>Hepatitis delta virus</taxon>
    </lineage>
</organism>
<accession>P25884</accession>
<reference key="1">
    <citation type="journal article" date="1990" name="J. Virol.">
        <title>Heterogeneity and evolution rates of delta virus RNA sequences.</title>
        <authorList>
            <person name="Imazeki F."/>
            <person name="Omata M."/>
            <person name="Ohto M."/>
        </authorList>
    </citation>
    <scope>NUCLEOTIDE SEQUENCE [GENOMIC RNA]</scope>
</reference>
<reference key="2">
    <citation type="journal article" date="2005" name="Acta Virol.">
        <title>Hepatitis D.</title>
        <authorList>
            <person name="Husa P."/>
            <person name="Linhartova A."/>
            <person name="Nemecek V."/>
            <person name="Husova L."/>
        </authorList>
    </citation>
    <scope>REVIEW</scope>
</reference>
<reference key="3">
    <citation type="journal article" date="2006" name="Curr. Top. Microbiol. Immunol.">
        <title>Post-translational modification of delta antigen of hepatitis D virus.</title>
        <authorList>
            <person name="Huang W.H."/>
            <person name="Chen C.W."/>
            <person name="Wu H.L."/>
            <person name="Chen P.J."/>
        </authorList>
    </citation>
    <scope>REVIEW</scope>
</reference>
<name>SHDAG_HDVS2</name>
<protein>
    <recommendedName>
        <fullName>Small delta antigen</fullName>
        <shortName>S-HDAg</shortName>
    </recommendedName>
    <alternativeName>
        <fullName>p24</fullName>
    </alternativeName>
</protein>
<dbReference type="EMBL" id="D90193">
    <property type="protein sequence ID" value="BAA14217.1"/>
    <property type="molecule type" value="Genomic_RNA"/>
</dbReference>
<dbReference type="SMR" id="P25884"/>
<dbReference type="Proteomes" id="UP000008112">
    <property type="component" value="Genome"/>
</dbReference>
<dbReference type="GO" id="GO:0043657">
    <property type="term" value="C:host cell"/>
    <property type="evidence" value="ECO:0007669"/>
    <property type="project" value="GOC"/>
</dbReference>
<dbReference type="GO" id="GO:0042025">
    <property type="term" value="C:host cell nucleus"/>
    <property type="evidence" value="ECO:0007669"/>
    <property type="project" value="UniProtKB-SubCell"/>
</dbReference>
<dbReference type="GO" id="GO:0044423">
    <property type="term" value="C:virion component"/>
    <property type="evidence" value="ECO:0007669"/>
    <property type="project" value="UniProtKB-KW"/>
</dbReference>
<dbReference type="GO" id="GO:0003723">
    <property type="term" value="F:RNA binding"/>
    <property type="evidence" value="ECO:0007669"/>
    <property type="project" value="UniProtKB-KW"/>
</dbReference>
<dbReference type="GO" id="GO:0046718">
    <property type="term" value="P:symbiont entry into host cell"/>
    <property type="evidence" value="ECO:0007669"/>
    <property type="project" value="UniProtKB-KW"/>
</dbReference>
<dbReference type="GO" id="GO:0075732">
    <property type="term" value="P:viral penetration into host nucleus"/>
    <property type="evidence" value="ECO:0007669"/>
    <property type="project" value="UniProtKB-KW"/>
</dbReference>
<dbReference type="Gene3D" id="4.10.220.40">
    <property type="entry name" value="Delta antigen, N-terminal"/>
    <property type="match status" value="1"/>
</dbReference>
<dbReference type="InterPro" id="IPR027403">
    <property type="entry name" value="Delta_antigen_N"/>
</dbReference>
<dbReference type="InterPro" id="IPR037517">
    <property type="entry name" value="HDAG_dom"/>
</dbReference>
<dbReference type="InterPro" id="IPR002506">
    <property type="entry name" value="HDV_ag"/>
</dbReference>
<dbReference type="Pfam" id="PF01517">
    <property type="entry name" value="HDV_ag"/>
    <property type="match status" value="1"/>
</dbReference>
<dbReference type="SUPFAM" id="SSF58108">
    <property type="entry name" value="Oligomerization domain of hepatitis delta antigen"/>
    <property type="match status" value="1"/>
</dbReference>
<dbReference type="PROSITE" id="PS51838">
    <property type="entry name" value="HDAG"/>
    <property type="match status" value="1"/>
</dbReference>
<keyword id="KW-0007">Acetylation</keyword>
<keyword id="KW-1048">Host nucleus</keyword>
<keyword id="KW-0945">Host-virus interaction</keyword>
<keyword id="KW-0488">Methylation</keyword>
<keyword id="KW-0597">Phosphoprotein</keyword>
<keyword id="KW-0691">RNA editing</keyword>
<keyword id="KW-0694">RNA-binding</keyword>
<keyword id="KW-1163">Viral penetration into host nucleus</keyword>
<keyword id="KW-0946">Virion</keyword>
<keyword id="KW-1160">Virus entry into host cell</keyword>
<sequence>MSQSETRRGRRGTREETLEKWITARKKAEELEKDLRKARKTIKKLEEENPWLGNILGIIRKGKDGEGAPPAKRPRTDQMEVDSGPGKRPHKSGFTDKEREDHRRRKALENKKKQLSAGGKILSKEEEEELRRLTDEDEERKRRVAGPRVGDVNPSRGGPRGAPGGGFVPQMAGVPESPFSRTGEGLDIRGTQGFP</sequence>
<evidence type="ECO:0000250" key="1"/>
<evidence type="ECO:0000250" key="2">
    <source>
        <dbReference type="UniProtKB" id="P0C6L3"/>
    </source>
</evidence>
<evidence type="ECO:0000255" key="3"/>
<evidence type="ECO:0000255" key="4">
    <source>
        <dbReference type="PROSITE-ProRule" id="PRU01183"/>
    </source>
</evidence>
<evidence type="ECO:0000256" key="5">
    <source>
        <dbReference type="SAM" id="MobiDB-lite"/>
    </source>
</evidence>
<evidence type="ECO:0000305" key="6"/>
<feature type="chain" id="PRO_0000038147" description="Small delta antigen">
    <location>
        <begin position="1"/>
        <end position="195"/>
    </location>
</feature>
<feature type="domain" description="HDAg" evidence="4">
    <location>
        <begin position="21"/>
        <end position="195"/>
    </location>
</feature>
<feature type="region of interest" description="Dimerization" evidence="3">
    <location>
        <begin position="13"/>
        <end position="60"/>
    </location>
</feature>
<feature type="region of interest" description="Disordered" evidence="5">
    <location>
        <begin position="58"/>
        <end position="195"/>
    </location>
</feature>
<feature type="region of interest" description="RNA-binding" evidence="4">
    <location>
        <begin position="97"/>
        <end position="107"/>
    </location>
</feature>
<feature type="region of interest" description="RNAPII-binding" evidence="4">
    <location>
        <begin position="130"/>
        <end position="195"/>
    </location>
</feature>
<feature type="region of interest" description="RNA-binding" evidence="4">
    <location>
        <begin position="136"/>
        <end position="146"/>
    </location>
</feature>
<feature type="short sequence motif" description="Nuclear localization signal" evidence="2">
    <location>
        <begin position="66"/>
        <end position="75"/>
    </location>
</feature>
<feature type="compositionally biased region" description="Basic and acidic residues" evidence="5">
    <location>
        <begin position="93"/>
        <end position="112"/>
    </location>
</feature>
<feature type="compositionally biased region" description="Gly residues" evidence="5">
    <location>
        <begin position="158"/>
        <end position="167"/>
    </location>
</feature>
<feature type="modified residue" description="Phosphoserine; by host CK2" evidence="2">
    <location>
        <position position="2"/>
    </location>
</feature>
<feature type="modified residue" description="Omega-N-methylated arginine; by host PRMT1" evidence="2">
    <location>
        <position position="14"/>
    </location>
</feature>
<feature type="modified residue" description="N6-acetyllysine; by host" evidence="2">
    <location>
        <position position="72"/>
    </location>
</feature>
<feature type="modified residue" description="Phosphoserine; by host" evidence="2">
    <location>
        <position position="123"/>
    </location>
</feature>
<feature type="modified residue" description="Phosphoserine; by host MAPK1 and MAPK3" evidence="2">
    <location>
        <position position="177"/>
    </location>
</feature>
<feature type="modified residue" description="Phosphothreonine; by host" evidence="2">
    <location>
        <position position="182"/>
    </location>
</feature>
<organismHost>
    <name type="scientific">Homo sapiens</name>
    <name type="common">Human</name>
    <dbReference type="NCBI Taxonomy" id="9606"/>
</organismHost>
<proteinExistence type="inferred from homology"/>